<protein>
    <recommendedName>
        <fullName evidence="1">Putative double-stranded DNA mimic protein VP1949</fullName>
    </recommendedName>
</protein>
<comment type="function">
    <text evidence="1">May act as a double-stranded DNA (dsDNA) mimic. Probably regulates the activity of a dsDNA-binding protein.</text>
</comment>
<comment type="similarity">
    <text evidence="1">Belongs to the putative dsDNA mimic protein family.</text>
</comment>
<gene>
    <name type="ordered locus">VP1949</name>
</gene>
<dbReference type="EMBL" id="BA000031">
    <property type="protein sequence ID" value="BAC60212.1"/>
    <property type="molecule type" value="Genomic_DNA"/>
</dbReference>
<dbReference type="RefSeq" id="NP_798328.1">
    <property type="nucleotide sequence ID" value="NC_004603.1"/>
</dbReference>
<dbReference type="RefSeq" id="WP_005465080.1">
    <property type="nucleotide sequence ID" value="NC_004603.1"/>
</dbReference>
<dbReference type="SMR" id="Q87NB9"/>
<dbReference type="GeneID" id="1189460"/>
<dbReference type="KEGG" id="vpa:VP1949"/>
<dbReference type="PATRIC" id="fig|223926.6.peg.1865"/>
<dbReference type="eggNOG" id="COG3099">
    <property type="taxonomic scope" value="Bacteria"/>
</dbReference>
<dbReference type="HOGENOM" id="CLU_143392_0_0_6"/>
<dbReference type="Proteomes" id="UP000002493">
    <property type="component" value="Chromosome 1"/>
</dbReference>
<dbReference type="Gene3D" id="3.10.450.140">
    <property type="entry name" value="dsDNA mimic, putative"/>
    <property type="match status" value="1"/>
</dbReference>
<dbReference type="HAMAP" id="MF_00680">
    <property type="entry name" value="Put_dsDNA_mimic"/>
    <property type="match status" value="1"/>
</dbReference>
<dbReference type="InterPro" id="IPR007376">
    <property type="entry name" value="dsDNA_mimic_put"/>
</dbReference>
<dbReference type="InterPro" id="IPR036763">
    <property type="entry name" value="Put_dsDNA_mimic_sf"/>
</dbReference>
<dbReference type="NCBIfam" id="NF003469">
    <property type="entry name" value="PRK05094.1"/>
    <property type="match status" value="1"/>
</dbReference>
<dbReference type="Pfam" id="PF04269">
    <property type="entry name" value="DUF440"/>
    <property type="match status" value="1"/>
</dbReference>
<dbReference type="PIRSF" id="PIRSF004916">
    <property type="entry name" value="UCP004916"/>
    <property type="match status" value="1"/>
</dbReference>
<dbReference type="SUPFAM" id="SSF102816">
    <property type="entry name" value="Putative dsDNA mimic"/>
    <property type="match status" value="1"/>
</dbReference>
<proteinExistence type="inferred from homology"/>
<name>Y1949_VIBPA</name>
<evidence type="ECO:0000255" key="1">
    <source>
        <dbReference type="HAMAP-Rule" id="MF_00680"/>
    </source>
</evidence>
<reference key="1">
    <citation type="journal article" date="2003" name="Lancet">
        <title>Genome sequence of Vibrio parahaemolyticus: a pathogenic mechanism distinct from that of V. cholerae.</title>
        <authorList>
            <person name="Makino K."/>
            <person name="Oshima K."/>
            <person name="Kurokawa K."/>
            <person name="Yokoyama K."/>
            <person name="Uda T."/>
            <person name="Tagomori K."/>
            <person name="Iijima Y."/>
            <person name="Najima M."/>
            <person name="Nakano M."/>
            <person name="Yamashita A."/>
            <person name="Kubota Y."/>
            <person name="Kimura S."/>
            <person name="Yasunaga T."/>
            <person name="Honda T."/>
            <person name="Shinagawa H."/>
            <person name="Hattori M."/>
            <person name="Iida T."/>
        </authorList>
    </citation>
    <scope>NUCLEOTIDE SEQUENCE [LARGE SCALE GENOMIC DNA]</scope>
    <source>
        <strain>RIMD 2210633</strain>
    </source>
</reference>
<sequence>MSDLISYDDVIDAAYDIFLEMAPDNLEPADVILFTAQFEDRGAAELVETGEDWVEHVGFEVDKEVYAEVRIGLVNEENDVLDDVFARMLISRDPEHKFCHMLWKRD</sequence>
<accession>Q87NB9</accession>
<feature type="chain" id="PRO_0000072786" description="Putative double-stranded DNA mimic protein VP1949">
    <location>
        <begin position="1"/>
        <end position="106"/>
    </location>
</feature>
<organism>
    <name type="scientific">Vibrio parahaemolyticus serotype O3:K6 (strain RIMD 2210633)</name>
    <dbReference type="NCBI Taxonomy" id="223926"/>
    <lineage>
        <taxon>Bacteria</taxon>
        <taxon>Pseudomonadati</taxon>
        <taxon>Pseudomonadota</taxon>
        <taxon>Gammaproteobacteria</taxon>
        <taxon>Vibrionales</taxon>
        <taxon>Vibrionaceae</taxon>
        <taxon>Vibrio</taxon>
    </lineage>
</organism>